<sequence>IATVDCSDYPKPVCSLEYMPLCGSDSKTYSNKCNFCNAVADSNGTLTLSHFGKC</sequence>
<accession>P05564</accession>
<evidence type="ECO:0000255" key="1">
    <source>
        <dbReference type="PROSITE-ProRule" id="PRU00798"/>
    </source>
</evidence>
<keyword id="KW-0903">Direct protein sequencing</keyword>
<keyword id="KW-1015">Disulfide bond</keyword>
<keyword id="KW-0325">Glycoprotein</keyword>
<keyword id="KW-0646">Protease inhibitor</keyword>
<keyword id="KW-0677">Repeat</keyword>
<keyword id="KW-0964">Secreted</keyword>
<keyword id="KW-0722">Serine protease inhibitor</keyword>
<protein>
    <recommendedName>
        <fullName>Ovomucoid</fullName>
    </recommendedName>
</protein>
<name>IOVO_PHASU</name>
<reference key="1">
    <citation type="journal article" date="1987" name="Biochemistry">
        <title>Ovomucoid third domains from 100 avian species: isolation, sequences, and hypervariability of enzyme-inhibitor contact residues.</title>
        <authorList>
            <person name="Laskowski M. Jr."/>
            <person name="Kato I."/>
            <person name="Ardelt W."/>
            <person name="Cook J."/>
            <person name="Denton A."/>
            <person name="Empie M.W."/>
            <person name="Kohr W.J."/>
            <person name="Park S.J."/>
            <person name="Parks K."/>
            <person name="Schatzley B.L."/>
            <person name="Schoenberger O.L."/>
            <person name="Tashiro M."/>
            <person name="Vichot G."/>
            <person name="Whatley H.E."/>
            <person name="Wieczorek A."/>
            <person name="Wieczorek M."/>
        </authorList>
    </citation>
    <scope>PROTEIN SEQUENCE</scope>
</reference>
<proteinExistence type="evidence at protein level"/>
<organism>
    <name type="scientific">Phalacrocorax sulcirostris</name>
    <name type="common">Little black cormorant</name>
    <name type="synonym">Black shag</name>
    <dbReference type="NCBI Taxonomy" id="9210"/>
    <lineage>
        <taxon>Eukaryota</taxon>
        <taxon>Metazoa</taxon>
        <taxon>Chordata</taxon>
        <taxon>Craniata</taxon>
        <taxon>Vertebrata</taxon>
        <taxon>Euteleostomi</taxon>
        <taxon>Archelosauria</taxon>
        <taxon>Archosauria</taxon>
        <taxon>Dinosauria</taxon>
        <taxon>Saurischia</taxon>
        <taxon>Theropoda</taxon>
        <taxon>Coelurosauria</taxon>
        <taxon>Aves</taxon>
        <taxon>Neognathae</taxon>
        <taxon>Neoaves</taxon>
        <taxon>Aequornithes</taxon>
        <taxon>Suliformes</taxon>
        <taxon>Phalacrocoracidae</taxon>
        <taxon>Phalacrocorax</taxon>
    </lineage>
</organism>
<feature type="chain" id="PRO_0000073163" description="Ovomucoid">
    <location>
        <begin position="1" status="less than"/>
        <end position="54" status="greater than"/>
    </location>
</feature>
<feature type="domain" description="Kazal-like" evidence="1">
    <location>
        <begin position="4"/>
        <end position="54"/>
    </location>
</feature>
<feature type="site" description="Reactive bond 3">
    <location>
        <begin position="16"/>
        <end position="17"/>
    </location>
</feature>
<feature type="glycosylation site" description="N-linked (GlcNAc...) asparagine">
    <location>
        <position position="43"/>
    </location>
</feature>
<feature type="disulfide bond">
    <location>
        <begin position="6"/>
        <end position="36"/>
    </location>
</feature>
<feature type="disulfide bond">
    <location>
        <begin position="14"/>
        <end position="33"/>
    </location>
</feature>
<feature type="disulfide bond">
    <location>
        <begin position="22"/>
        <end position="54"/>
    </location>
</feature>
<feature type="non-terminal residue">
    <location>
        <position position="1"/>
    </location>
</feature>
<feature type="non-terminal residue">
    <location>
        <position position="54"/>
    </location>
</feature>
<comment type="subcellular location">
    <subcellularLocation>
        <location>Secreted</location>
    </subcellularLocation>
</comment>
<comment type="domain">
    <text>Avian ovomucoid consists of three homologous, tandem Kazal family inhibitory domains.</text>
</comment>
<dbReference type="PIR" id="G31442">
    <property type="entry name" value="G31442"/>
</dbReference>
<dbReference type="SMR" id="P05564"/>
<dbReference type="GO" id="GO:0005576">
    <property type="term" value="C:extracellular region"/>
    <property type="evidence" value="ECO:0007669"/>
    <property type="project" value="UniProtKB-SubCell"/>
</dbReference>
<dbReference type="GO" id="GO:0004867">
    <property type="term" value="F:serine-type endopeptidase inhibitor activity"/>
    <property type="evidence" value="ECO:0007669"/>
    <property type="project" value="UniProtKB-KW"/>
</dbReference>
<dbReference type="CDD" id="cd00104">
    <property type="entry name" value="KAZAL_FS"/>
    <property type="match status" value="1"/>
</dbReference>
<dbReference type="FunFam" id="3.30.60.30:FF:000037">
    <property type="entry name" value="Ovomucoid"/>
    <property type="match status" value="1"/>
</dbReference>
<dbReference type="Gene3D" id="3.30.60.30">
    <property type="match status" value="1"/>
</dbReference>
<dbReference type="InterPro" id="IPR051597">
    <property type="entry name" value="Bifunctional_prot_inhibitor"/>
</dbReference>
<dbReference type="InterPro" id="IPR002350">
    <property type="entry name" value="Kazal_dom"/>
</dbReference>
<dbReference type="InterPro" id="IPR036058">
    <property type="entry name" value="Kazal_dom_sf"/>
</dbReference>
<dbReference type="InterPro" id="IPR001239">
    <property type="entry name" value="Prot_inh_Kazal-m"/>
</dbReference>
<dbReference type="PANTHER" id="PTHR47729:SF1">
    <property type="entry name" value="OVOMUCOID-LIKE-RELATED"/>
    <property type="match status" value="1"/>
</dbReference>
<dbReference type="PANTHER" id="PTHR47729">
    <property type="entry name" value="SERINE PEPTIDASE INHIBITOR, KAZAL TYPE 2, TANDEM DUPLICATE 1-RELATED"/>
    <property type="match status" value="1"/>
</dbReference>
<dbReference type="Pfam" id="PF00050">
    <property type="entry name" value="Kazal_1"/>
    <property type="match status" value="1"/>
</dbReference>
<dbReference type="PRINTS" id="PR00290">
    <property type="entry name" value="KAZALINHBTR"/>
</dbReference>
<dbReference type="SMART" id="SM00280">
    <property type="entry name" value="KAZAL"/>
    <property type="match status" value="1"/>
</dbReference>
<dbReference type="SUPFAM" id="SSF100895">
    <property type="entry name" value="Kazal-type serine protease inhibitors"/>
    <property type="match status" value="1"/>
</dbReference>
<dbReference type="PROSITE" id="PS00282">
    <property type="entry name" value="KAZAL_1"/>
    <property type="match status" value="1"/>
</dbReference>
<dbReference type="PROSITE" id="PS51465">
    <property type="entry name" value="KAZAL_2"/>
    <property type="match status" value="1"/>
</dbReference>